<proteinExistence type="evidence at protein level"/>
<gene>
    <name evidence="6 7 8" type="primary">SME-1</name>
    <name evidence="13" type="synonym">blaSME-1</name>
    <name evidence="14" type="synonym">blaSME-4</name>
    <name evidence="12" type="synonym">blaSME1</name>
    <name type="synonym">bpl-1</name>
    <name type="synonym">bplA</name>
    <name evidence="11" type="synonym">sme-2</name>
    <name type="synonym">smeA</name>
</gene>
<organism>
    <name type="scientific">Serratia marcescens</name>
    <dbReference type="NCBI Taxonomy" id="615"/>
    <lineage>
        <taxon>Bacteria</taxon>
        <taxon>Pseudomonadati</taxon>
        <taxon>Pseudomonadota</taxon>
        <taxon>Gammaproteobacteria</taxon>
        <taxon>Enterobacterales</taxon>
        <taxon>Yersiniaceae</taxon>
        <taxon>Serratia</taxon>
    </lineage>
</organism>
<accession>P52682</accession>
<accession>Q54488</accession>
<comment type="function">
    <text evidence="2 3 5">Class A beta-lactamase which confers resistance to the beta-lactam antibiotics, including penicillins, some cephalosporins and carbapenems, to JM109 strain E.coli (PubMed:11807251, PubMed:8092824). Acts via hydrolysis of the beta-lactam ring (PubMed:11036019, PubMed:8092824). Has penicillin-, cephalosporin- and carbapenem-hydrolyzing activities (PubMed:11036019).</text>
</comment>
<comment type="catalytic activity">
    <reaction evidence="2 5">
        <text>a beta-lactam + H2O = a substituted beta-amino acid</text>
        <dbReference type="Rhea" id="RHEA:20401"/>
        <dbReference type="ChEBI" id="CHEBI:15377"/>
        <dbReference type="ChEBI" id="CHEBI:35627"/>
        <dbReference type="ChEBI" id="CHEBI:140347"/>
        <dbReference type="EC" id="3.5.2.6"/>
    </reaction>
</comment>
<comment type="activity regulation">
    <text evidence="2 5">Partially inhibited by the beta-lactamase-blocking agents, clavulanic acid and tazobactam (PubMed:11036019, PubMed:8092824). Not inhibited by EDTA (PubMed:11036019, PubMed:8092824).</text>
</comment>
<comment type="biophysicochemical properties">
    <kinetics>
        <KM evidence="2">16.7 uM for penicillin (at pH 7.0 and 25 degrees Celsius)</KM>
        <KM evidence="2">488 uM for ampicillin (at pH 7.0 and 25 degrees Celsius)</KM>
        <KM evidence="2">770 uM for cephaloridine (at pH 7.0 and 25 degrees Celsius)</KM>
        <KM evidence="2">202 uM for imipenem (at pH 7.0 and 25 degrees Celsius)</KM>
        <KM evidence="2">13.4 uM for meropenem (at pH 7.0 and 25 degrees Celsius)</KM>
        <KM evidence="2">259 uM for aztreonam (at pH 7.0 and 25 degrees Celsius)</KM>
        <KM evidence="5">62 uM for aztreonam (at pH 7.0)</KM>
        <text evidence="2">kcat is 19.3 sec(-1) with penicillin as substrate (at pH 7.0 and 25 degrees Celsius) (PubMed:11036019). kcat is 181 sec(-1) with ampicillin as substrate (at pH 7.0 and 25 degrees Celsius) (PubMed:11036019). kcat is 980 sec(-1) with cephaloridine as substrate (at pH 7.0 and 25 degrees Celsius) (PubMed:11036019). kcat is 104 sec(-1) with imipenem as substrate (at pH 7.0 and 25 degrees Celsius) (PubMed:11036019). kcat is 8.9 sec(-1) with meropenem as substrate (at pH 7.0 and 25 degrees Celsius) (PubMed:11036019). kcat is 108 sec(-1) with aztreonam as substrate (at pH 7.0 and 25 degrees Celsius) (PubMed:11036019).</text>
    </kinetics>
</comment>
<comment type="induction">
    <text evidence="4 5">Up-regulated by the carbapenem, imipenem (PubMed:7793864). Expression probably regulated by upstream promoter elements (PubMed:8092824).</text>
</comment>
<comment type="miscellaneous">
    <text evidence="10">The class A beta-lactamase family has a specific amino-acid numbering system, sometimes called Ambler or ABL numbering and often misspelt as Amber. A multiple sequence alignment was used to derive a consensus sequence and then the consensus was numbered taking into account insertions and deletions. This allows use of identical numbers, e.g. for active site residues, despite differences in protein length. UniProt always uses natural numbering of residues, hence there appear to be differences in numbering between this entry and some papers.</text>
</comment>
<comment type="similarity">
    <text evidence="9">Belongs to the class-A beta-lactamase family.</text>
</comment>
<reference evidence="11" key="1">
    <citation type="journal article" date="1994" name="Antimicrob. Agents Chemother.">
        <title>Cloning and sequence analysis of the gene for a carbapenem-hydrolyzing class A beta-lactamase, Sme-1, from Serratia marcescens S6.</title>
        <authorList>
            <person name="Naas T."/>
            <person name="Vandel L."/>
            <person name="Sougakoff W."/>
            <person name="Livermore D.M."/>
            <person name="Nordmann P."/>
        </authorList>
    </citation>
    <scope>NUCLEOTIDE SEQUENCE [GENOMIC DNA]</scope>
    <scope>PROTEIN SEQUENCE OF 28-38</scope>
    <scope>FUNCTION</scope>
    <scope>CATALYTIC ACTIVITY</scope>
    <scope>ACTIVITY REGULATION</scope>
    <scope>BIOPHYSICOCHEMICAL PROPERTIES</scope>
    <scope>INDUCTION</scope>
    <source>
        <strain evidence="11">S6</strain>
    </source>
</reference>
<reference evidence="9" key="2">
    <citation type="journal article" date="1995" name="Antimicrob. Agents Chemother.">
        <title>Characterization of an LysR family protein, SmeR from Serratia marcescens S6, its effect on expression of the carbapenem-hydrolyzing beta-lactamase Sme-1, and comparison of this regulator with other beta-lactamase regulators.</title>
        <authorList>
            <person name="Naas T."/>
            <person name="Livermore D.M."/>
            <person name="Nordmann P."/>
        </authorList>
    </citation>
    <scope>NUCLEOTIDE SEQUENCE [GENOMIC DNA] OF 1-32</scope>
    <scope>INDUCTION BY BETA-LACTAMS</scope>
    <source>
        <strain>S6</strain>
    </source>
</reference>
<reference evidence="11" key="3">
    <citation type="submission" date="1996-06" db="EMBL/GenBank/DDBJ databases">
        <title>Carbapenem-hydrolyzing beta-lactamase, Sme-2.</title>
        <authorList>
            <person name="Rasmussen B.A."/>
            <person name="Keeney D."/>
            <person name="Cohen C."/>
        </authorList>
    </citation>
    <scope>NUCLEOTIDE SEQUENCE [GENOMIC DNA]</scope>
    <source>
        <strain evidence="11">S6</strain>
    </source>
</reference>
<reference evidence="12" key="4">
    <citation type="journal article" date="2011" name="Diagn. Microbiol. Infect. Dis.">
        <title>Detection of 2 SME-1 carbapenemase-producing Serratia marcescens in Detroit.</title>
        <authorList>
            <person name="Fairfax M.R."/>
            <person name="Queenan A.M."/>
            <person name="Lephart P.R."/>
            <person name="Kaye K.S."/>
            <person name="Dror M."/>
            <person name="Arnous N."/>
            <person name="Salimnia T.T."/>
            <person name="Mitchell R.A."/>
            <person name="Alangaden G."/>
            <person name="Salimnia H."/>
        </authorList>
    </citation>
    <scope>NUCLEOTIDE SEQUENCE [GENOMIC DNA]</scope>
    <source>
        <strain evidence="12">SMDET-2</strain>
    </source>
</reference>
<reference evidence="14" key="5">
    <citation type="submission" date="2013-07" db="EMBL/GenBank/DDBJ databases">
        <title>Characterization of carbapenem resistant isolates from 2012.</title>
        <authorList>
            <person name="Farrell S.E."/>
            <person name="Castanheira M."/>
            <person name="Jones R.N."/>
        </authorList>
    </citation>
    <scope>NUCLEOTIDE SEQUENCE [GENOMIC DNA]</scope>
    <source>
        <strain evidence="14">41727R</strain>
    </source>
</reference>
<reference evidence="13" key="6">
    <citation type="journal article" date="2014" name="J. Antimicrob. Chemother.">
        <title>Serratia marcescens harbouring SME-type class A carbapenemases in Canada and the presence of blaSME on a novel genomic island, SmarGI1-1.</title>
        <authorList>
            <person name="Mataseje L.F."/>
            <person name="Boyd D.A."/>
            <person name="Delport J."/>
            <person name="Hoang L."/>
            <person name="Imperial M."/>
            <person name="Lefebvre B."/>
            <person name="Kuhn M."/>
            <person name="Van Caeseele P."/>
            <person name="Willey B.M."/>
            <person name="Mulvey M.R."/>
        </authorList>
    </citation>
    <scope>NUCLEOTIDE SEQUENCE [LARGE SCALE GENOMIC DNA]</scope>
    <source>
        <strain evidence="13">N12-0620</strain>
    </source>
</reference>
<reference evidence="9" key="7">
    <citation type="journal article" date="1991" name="Biochem. J.">
        <title>A standard numbering scheme for the class A beta-lactamases.</title>
        <authorList>
            <person name="Ambler R.P."/>
            <person name="Coulson A.F."/>
            <person name="Frere J.M."/>
            <person name="Ghuysen J.M."/>
            <person name="Joris B."/>
            <person name="Forsman M."/>
            <person name="Levesque R.C."/>
            <person name="Tiraby G."/>
            <person name="Waley S.G."/>
        </authorList>
    </citation>
    <scope>AMINO ACID NUMBERING SCHEME</scope>
</reference>
<reference key="8">
    <citation type="journal article" date="2000" name="Antimicrob. Agents Chemother.">
        <title>SME-type carbapenem-hydrolyzing class A beta-lactamases from geographically diverse Serratia marcescens strains.</title>
        <authorList>
            <person name="Queenan A.M."/>
            <person name="Torres-Viera C."/>
            <person name="Gold H.S."/>
            <person name="Carmeli Y."/>
            <person name="Eliopoulos G.M."/>
            <person name="Moellering R.C. Jr."/>
            <person name="Quinn J.P."/>
            <person name="Hindler J."/>
            <person name="Medeiros A.A."/>
            <person name="Bush K."/>
        </authorList>
    </citation>
    <scope>FUNCTION</scope>
    <scope>CATALYTIC ACTIVITY</scope>
    <scope>ACTIVITY REGULATION</scope>
    <scope>BIOPHYSICOCHEMICAL PROPERTIES</scope>
    <scope>MUTAGENESIS OF VAL-207</scope>
</reference>
<reference evidence="15" key="9">
    <citation type="journal article" date="2002" name="Acta Crystallogr. D">
        <title>Structure of the imipenem-hydrolyzing class A beta-lactamase SME-1 from Serratia marcescens.</title>
        <authorList>
            <person name="Sougakoff W."/>
            <person name="L'Hermite G."/>
            <person name="Pernot L."/>
            <person name="Naas T."/>
            <person name="Guillet V."/>
            <person name="Nordmann P."/>
            <person name="Jarlier V."/>
            <person name="Delettre J."/>
        </authorList>
    </citation>
    <scope>X-RAY CRYSTALLOGRAPHY (2.13 ANGSTROMS) OF 28-294</scope>
    <scope>FUNCTION</scope>
    <scope>DISULFIDE BOND</scope>
    <scope>MUTAGENESIS OF CYS-72</scope>
</reference>
<name>BLAS1_SERMA</name>
<protein>
    <recommendedName>
        <fullName evidence="6 7 8">Beta-lactamase SME-1</fullName>
        <ecNumber evidence="2 5">3.5.2.6</ecNumber>
    </recommendedName>
</protein>
<evidence type="ECO:0000250" key="1">
    <source>
        <dbReference type="UniProtKB" id="Q9F663"/>
    </source>
</evidence>
<evidence type="ECO:0000269" key="2">
    <source>
    </source>
</evidence>
<evidence type="ECO:0000269" key="3">
    <source>
    </source>
</evidence>
<evidence type="ECO:0000269" key="4">
    <source>
    </source>
</evidence>
<evidence type="ECO:0000269" key="5">
    <source>
    </source>
</evidence>
<evidence type="ECO:0000303" key="6">
    <source>
    </source>
</evidence>
<evidence type="ECO:0000303" key="7">
    <source>
    </source>
</evidence>
<evidence type="ECO:0000303" key="8">
    <source>
    </source>
</evidence>
<evidence type="ECO:0000305" key="9"/>
<evidence type="ECO:0000305" key="10">
    <source>
    </source>
</evidence>
<evidence type="ECO:0000312" key="11">
    <source>
        <dbReference type="EMBL" id="AAB03414.1"/>
    </source>
</evidence>
<evidence type="ECO:0000312" key="12">
    <source>
        <dbReference type="EMBL" id="AEJ79644.1"/>
    </source>
</evidence>
<evidence type="ECO:0000312" key="13">
    <source>
        <dbReference type="EMBL" id="AGZ03855.1"/>
    </source>
</evidence>
<evidence type="ECO:0000312" key="14">
    <source>
        <dbReference type="EMBL" id="AHA49908.1"/>
    </source>
</evidence>
<evidence type="ECO:0007744" key="15">
    <source>
        <dbReference type="PDB" id="1DY6"/>
    </source>
</evidence>
<evidence type="ECO:0007829" key="16">
    <source>
        <dbReference type="PDB" id="1DY6"/>
    </source>
</evidence>
<sequence>MSNKVNFKTASFLFSVCLALSAFNAHANKSDAAAKQIKKLEEDFDGRIGVFAIDTGSGNTFGYRSDERFPLCSSFKGFLAAAVLERVQQKKLDINQKVKYESRDLEYHSPITTKYKGSGMTLGDMASAALQYSDNGATNIIMERFLGGPEGMTKFMRSIGDNEFRLDRWELELNTAIPGDKRDTSTPKAVANSLNKLALGNVLNAKVKAIYQNWLKGNTTGDARIRASVPADWVVGDKTGSCGAYGTANDYAVIWPKNRAPLIVSIYTTRKSKDDKHSDKTIAEASRIAIQAID</sequence>
<dbReference type="EC" id="3.5.2.6" evidence="2 5"/>
<dbReference type="EMBL" id="U60295">
    <property type="protein sequence ID" value="AAB03414.1"/>
    <property type="molecule type" value="Genomic_DNA"/>
</dbReference>
<dbReference type="EMBL" id="JF974075">
    <property type="protein sequence ID" value="AEJ79644.1"/>
    <property type="molecule type" value="Genomic_DNA"/>
</dbReference>
<dbReference type="EMBL" id="KF615855">
    <property type="protein sequence ID" value="AGZ03855.1"/>
    <property type="molecule type" value="Genomic_DNA"/>
</dbReference>
<dbReference type="EMBL" id="KF481967">
    <property type="protein sequence ID" value="AHA49908.1"/>
    <property type="molecule type" value="Genomic_DNA"/>
</dbReference>
<dbReference type="EMBL" id="Z28968">
    <property type="protein sequence ID" value="CAA82281.1"/>
    <property type="molecule type" value="Genomic_DNA"/>
</dbReference>
<dbReference type="EMBL" id="Z30237">
    <property type="protein sequence ID" value="CAA82944.1"/>
    <property type="molecule type" value="Genomic_DNA"/>
</dbReference>
<dbReference type="PIR" id="S44080">
    <property type="entry name" value="S44080"/>
</dbReference>
<dbReference type="PDB" id="1DY6">
    <property type="method" value="X-ray"/>
    <property type="resolution" value="2.13 A"/>
    <property type="chains" value="A/B=28-294"/>
</dbReference>
<dbReference type="PDBsum" id="1DY6"/>
<dbReference type="SMR" id="P52682"/>
<dbReference type="CARD" id="ARO:3002382">
    <property type="molecule name" value="SME-4"/>
    <property type="mechanism identifier" value="ARO:0001004"/>
    <property type="mechanism name" value="antibiotic inactivation"/>
</dbReference>
<dbReference type="MEROPS" id="S11.A01"/>
<dbReference type="KEGG" id="ag:CAA82281"/>
<dbReference type="PATRIC" id="fig|615.109.peg.3851"/>
<dbReference type="SABIO-RK" id="P52682"/>
<dbReference type="EvolutionaryTrace" id="Q54488"/>
<dbReference type="GO" id="GO:0008800">
    <property type="term" value="F:beta-lactamase activity"/>
    <property type="evidence" value="ECO:0007669"/>
    <property type="project" value="UniProtKB-EC"/>
</dbReference>
<dbReference type="GO" id="GO:0030655">
    <property type="term" value="P:beta-lactam antibiotic catabolic process"/>
    <property type="evidence" value="ECO:0007669"/>
    <property type="project" value="InterPro"/>
</dbReference>
<dbReference type="GO" id="GO:0046677">
    <property type="term" value="P:response to antibiotic"/>
    <property type="evidence" value="ECO:0007669"/>
    <property type="project" value="UniProtKB-KW"/>
</dbReference>
<dbReference type="Gene3D" id="3.40.710.10">
    <property type="entry name" value="DD-peptidase/beta-lactamase superfamily"/>
    <property type="match status" value="1"/>
</dbReference>
<dbReference type="InterPro" id="IPR012338">
    <property type="entry name" value="Beta-lactam/transpept-like"/>
</dbReference>
<dbReference type="InterPro" id="IPR045155">
    <property type="entry name" value="Beta-lactam_cat"/>
</dbReference>
<dbReference type="InterPro" id="IPR000871">
    <property type="entry name" value="Beta-lactam_class-A"/>
</dbReference>
<dbReference type="NCBIfam" id="NF033103">
    <property type="entry name" value="bla_class_A"/>
    <property type="match status" value="1"/>
</dbReference>
<dbReference type="NCBIfam" id="NF012142">
    <property type="entry name" value="blaSME"/>
    <property type="match status" value="1"/>
</dbReference>
<dbReference type="NCBIfam" id="NF000538">
    <property type="entry name" value="classA_carba"/>
    <property type="match status" value="1"/>
</dbReference>
<dbReference type="PANTHER" id="PTHR35333">
    <property type="entry name" value="BETA-LACTAMASE"/>
    <property type="match status" value="1"/>
</dbReference>
<dbReference type="PANTHER" id="PTHR35333:SF3">
    <property type="entry name" value="BETA-LACTAMASE-TYPE TRANSPEPTIDASE FOLD CONTAINING PROTEIN"/>
    <property type="match status" value="1"/>
</dbReference>
<dbReference type="Pfam" id="PF13354">
    <property type="entry name" value="Beta-lactamase2"/>
    <property type="match status" value="1"/>
</dbReference>
<dbReference type="PRINTS" id="PR00118">
    <property type="entry name" value="BLACTAMASEA"/>
</dbReference>
<dbReference type="SUPFAM" id="SSF56601">
    <property type="entry name" value="beta-lactamase/transpeptidase-like"/>
    <property type="match status" value="1"/>
</dbReference>
<keyword id="KW-0002">3D-structure</keyword>
<keyword id="KW-0046">Antibiotic resistance</keyword>
<keyword id="KW-0903">Direct protein sequencing</keyword>
<keyword id="KW-1015">Disulfide bond</keyword>
<keyword id="KW-0378">Hydrolase</keyword>
<keyword id="KW-0732">Signal</keyword>
<feature type="signal peptide" evidence="5">
    <location>
        <begin position="1"/>
        <end position="27"/>
    </location>
</feature>
<feature type="chain" id="PRO_0000017001" description="Beta-lactamase SME-1">
    <location>
        <begin position="28"/>
        <end position="294"/>
    </location>
</feature>
<feature type="active site" description="Nucleophile; acyl-ester intermediate" evidence="1">
    <location>
        <position position="73"/>
    </location>
</feature>
<feature type="active site" description="Proton acceptor" evidence="1">
    <location>
        <position position="172"/>
    </location>
</feature>
<feature type="binding site" evidence="1">
    <location>
        <position position="73"/>
    </location>
    <ligand>
        <name>a beta-lactam</name>
        <dbReference type="ChEBI" id="CHEBI:35627"/>
    </ligand>
</feature>
<feature type="binding site" evidence="1">
    <location>
        <position position="76"/>
    </location>
    <ligand>
        <name>a beta-lactam</name>
        <dbReference type="ChEBI" id="CHEBI:35627"/>
    </ligand>
</feature>
<feature type="binding site" evidence="1">
    <location>
        <position position="133"/>
    </location>
    <ligand>
        <name>a beta-lactam</name>
        <dbReference type="ChEBI" id="CHEBI:35627"/>
    </ligand>
</feature>
<feature type="binding site" evidence="1">
    <location>
        <position position="135"/>
    </location>
    <ligand>
        <name>a beta-lactam</name>
        <dbReference type="ChEBI" id="CHEBI:35627"/>
    </ligand>
</feature>
<feature type="binding site" evidence="1">
    <location>
        <position position="239"/>
    </location>
    <ligand>
        <name>a beta-lactam</name>
        <dbReference type="ChEBI" id="CHEBI:35627"/>
    </ligand>
</feature>
<feature type="disulfide bond" evidence="3 15">
    <location>
        <begin position="72"/>
        <end position="242"/>
    </location>
</feature>
<feature type="mutagenesis site" description="Abolishes resistance to imipenem, amoxicillin, ticarcillin, cefoxitin and aztreonam in the JM109 strain E.coli." evidence="3">
    <original>C</original>
    <variation>A</variation>
    <location>
        <position position="72"/>
    </location>
</feature>
<feature type="mutagenesis site" description="Similar catalytic efficiency to wild-type with respect to penicillins, cephalosporins and carbapenems." evidence="2">
    <original>V</original>
    <variation>E</variation>
    <location>
        <position position="207"/>
    </location>
</feature>
<feature type="sequence conflict" description="In Ref. 1; AAB03414/AEJ79644/AGZ03855/AHA49908." evidence="9" ref="1">
    <original>Y</original>
    <variation>I</variation>
    <location>
        <position position="245"/>
    </location>
</feature>
<feature type="helix" evidence="16">
    <location>
        <begin position="29"/>
        <end position="43"/>
    </location>
</feature>
<feature type="strand" evidence="16">
    <location>
        <begin position="46"/>
        <end position="54"/>
    </location>
</feature>
<feature type="turn" evidence="16">
    <location>
        <begin position="55"/>
        <end position="57"/>
    </location>
</feature>
<feature type="strand" evidence="16">
    <location>
        <begin position="60"/>
        <end position="64"/>
    </location>
</feature>
<feature type="helix" evidence="16">
    <location>
        <begin position="72"/>
        <end position="75"/>
    </location>
</feature>
<feature type="helix" evidence="16">
    <location>
        <begin position="76"/>
        <end position="88"/>
    </location>
</feature>
<feature type="helix" evidence="16">
    <location>
        <begin position="110"/>
        <end position="114"/>
    </location>
</feature>
<feature type="turn" evidence="16">
    <location>
        <begin position="115"/>
        <end position="118"/>
    </location>
</feature>
<feature type="helix" evidence="16">
    <location>
        <begin position="122"/>
        <end position="131"/>
    </location>
</feature>
<feature type="helix" evidence="16">
    <location>
        <begin position="135"/>
        <end position="144"/>
    </location>
</feature>
<feature type="helix" evidence="16">
    <location>
        <begin position="148"/>
        <end position="158"/>
    </location>
</feature>
<feature type="helix" evidence="16">
    <location>
        <begin position="172"/>
        <end position="175"/>
    </location>
</feature>
<feature type="helix" evidence="16">
    <location>
        <begin position="187"/>
        <end position="198"/>
    </location>
</feature>
<feature type="strand" evidence="16">
    <location>
        <begin position="200"/>
        <end position="203"/>
    </location>
</feature>
<feature type="helix" evidence="16">
    <location>
        <begin position="205"/>
        <end position="216"/>
    </location>
</feature>
<feature type="turn" evidence="16">
    <location>
        <begin position="222"/>
        <end position="224"/>
    </location>
</feature>
<feature type="helix" evidence="16">
    <location>
        <begin position="225"/>
        <end position="228"/>
    </location>
</feature>
<feature type="strand" evidence="16">
    <location>
        <begin position="233"/>
        <end position="241"/>
    </location>
</feature>
<feature type="strand" evidence="16">
    <location>
        <begin position="248"/>
        <end position="255"/>
    </location>
</feature>
<feature type="strand" evidence="16">
    <location>
        <begin position="262"/>
        <end position="272"/>
    </location>
</feature>
<feature type="helix" evidence="16">
    <location>
        <begin position="279"/>
        <end position="292"/>
    </location>
</feature>